<feature type="chain" id="PRO_0000403578" description="Flap endonuclease 1">
    <location>
        <begin position="1"/>
        <end position="358"/>
    </location>
</feature>
<feature type="region of interest" description="N-domain">
    <location>
        <begin position="1"/>
        <end position="103"/>
    </location>
</feature>
<feature type="region of interest" description="I-domain">
    <location>
        <begin position="121"/>
        <end position="252"/>
    </location>
</feature>
<feature type="region of interest" description="Interaction with PCNA" evidence="1">
    <location>
        <begin position="346"/>
        <end position="354"/>
    </location>
</feature>
<feature type="binding site" evidence="1">
    <location>
        <position position="34"/>
    </location>
    <ligand>
        <name>Mg(2+)</name>
        <dbReference type="ChEBI" id="CHEBI:18420"/>
        <label>1</label>
    </ligand>
</feature>
<feature type="binding site" evidence="1">
    <location>
        <position position="47"/>
    </location>
    <ligand>
        <name>DNA</name>
        <dbReference type="ChEBI" id="CHEBI:16991"/>
    </ligand>
</feature>
<feature type="binding site" evidence="1">
    <location>
        <position position="69"/>
    </location>
    <ligand>
        <name>DNA</name>
        <dbReference type="ChEBI" id="CHEBI:16991"/>
    </ligand>
</feature>
<feature type="binding site" evidence="1">
    <location>
        <position position="85"/>
    </location>
    <ligand>
        <name>Mg(2+)</name>
        <dbReference type="ChEBI" id="CHEBI:18420"/>
        <label>1</label>
    </ligand>
</feature>
<feature type="binding site" evidence="1">
    <location>
        <position position="157"/>
    </location>
    <ligand>
        <name>DNA</name>
        <dbReference type="ChEBI" id="CHEBI:16991"/>
    </ligand>
</feature>
<feature type="binding site" evidence="1">
    <location>
        <position position="157"/>
    </location>
    <ligand>
        <name>Mg(2+)</name>
        <dbReference type="ChEBI" id="CHEBI:18420"/>
        <label>1</label>
    </ligand>
</feature>
<feature type="binding site" evidence="1">
    <location>
        <position position="159"/>
    </location>
    <ligand>
        <name>Mg(2+)</name>
        <dbReference type="ChEBI" id="CHEBI:18420"/>
        <label>1</label>
    </ligand>
</feature>
<feature type="binding site" evidence="1">
    <location>
        <position position="178"/>
    </location>
    <ligand>
        <name>Mg(2+)</name>
        <dbReference type="ChEBI" id="CHEBI:18420"/>
        <label>2</label>
    </ligand>
</feature>
<feature type="binding site" evidence="1">
    <location>
        <position position="180"/>
    </location>
    <ligand>
        <name>Mg(2+)</name>
        <dbReference type="ChEBI" id="CHEBI:18420"/>
        <label>2</label>
    </ligand>
</feature>
<feature type="binding site" evidence="1">
    <location>
        <position position="230"/>
    </location>
    <ligand>
        <name>DNA</name>
        <dbReference type="ChEBI" id="CHEBI:16991"/>
    </ligand>
</feature>
<feature type="binding site" evidence="1">
    <location>
        <position position="232"/>
    </location>
    <ligand>
        <name>DNA</name>
        <dbReference type="ChEBI" id="CHEBI:16991"/>
    </ligand>
</feature>
<feature type="binding site" evidence="1">
    <location>
        <position position="232"/>
    </location>
    <ligand>
        <name>Mg(2+)</name>
        <dbReference type="ChEBI" id="CHEBI:18420"/>
        <label>2</label>
    </ligand>
</feature>
<evidence type="ECO:0000255" key="1">
    <source>
        <dbReference type="HAMAP-Rule" id="MF_03140"/>
    </source>
</evidence>
<name>FEN1_ENTBH</name>
<proteinExistence type="inferred from homology"/>
<accession>B7XHS8</accession>
<keyword id="KW-0227">DNA damage</keyword>
<keyword id="KW-0234">DNA repair</keyword>
<keyword id="KW-0235">DNA replication</keyword>
<keyword id="KW-0255">Endonuclease</keyword>
<keyword id="KW-0269">Exonuclease</keyword>
<keyword id="KW-0378">Hydrolase</keyword>
<keyword id="KW-0460">Magnesium</keyword>
<keyword id="KW-0479">Metal-binding</keyword>
<keyword id="KW-0496">Mitochondrion</keyword>
<keyword id="KW-0540">Nuclease</keyword>
<keyword id="KW-0539">Nucleus</keyword>
<keyword id="KW-0597">Phosphoprotein</keyword>
<gene>
    <name evidence="1" type="primary">FEN1</name>
    <name type="ORF">EBI_21734</name>
</gene>
<protein>
    <recommendedName>
        <fullName evidence="1">Flap endonuclease 1</fullName>
        <shortName evidence="1">FEN-1</shortName>
        <ecNumber evidence="1">3.1.-.-</ecNumber>
    </recommendedName>
    <alternativeName>
        <fullName evidence="1">Flap structure-specific endonuclease 1</fullName>
    </alternativeName>
</protein>
<comment type="function">
    <text evidence="1">Structure-specific nuclease with 5'-flap endonuclease and 5'-3' exonuclease activities involved in DNA replication and repair. During DNA replication, cleaves the 5'-overhanging flap structure that is generated by displacement synthesis when DNA polymerase encounters the 5'-end of a downstream Okazaki fragment. It enters the flap from the 5'-end and then tracks to cleave the flap base, leaving a nick for ligation. Also involved in the long patch base excision repair (LP-BER) pathway, by cleaving within the apurinic/apyrimidinic (AP) site-terminated flap. Acts as a genome stabilization factor that prevents flaps from equilibrating into structures that lead to duplications and deletions. Also possesses 5'-3' exonuclease activity on nicked or gapped double-stranded DNA, and exhibits RNase H activity. Also involved in replication and repair of rDNA and in repairing mitochondrial DNA.</text>
</comment>
<comment type="cofactor">
    <cofactor evidence="1">
        <name>Mg(2+)</name>
        <dbReference type="ChEBI" id="CHEBI:18420"/>
    </cofactor>
    <text evidence="1">Binds 2 magnesium ions per subunit. They probably participate in the reaction catalyzed by the enzyme. May bind an additional third magnesium ion after substrate binding.</text>
</comment>
<comment type="subunit">
    <text evidence="1">Interacts with PCNA. Three molecules of FEN1 bind to one PCNA trimer with each molecule binding to one PCNA monomer. PCNA stimulates the nuclease activity without altering cleavage specificity.</text>
</comment>
<comment type="subcellular location">
    <subcellularLocation>
        <location evidence="1">Nucleus</location>
        <location evidence="1">Nucleolus</location>
    </subcellularLocation>
    <subcellularLocation>
        <location evidence="1">Nucleus</location>
        <location evidence="1">Nucleoplasm</location>
    </subcellularLocation>
    <subcellularLocation>
        <location evidence="1">Mitochondrion</location>
    </subcellularLocation>
    <text evidence="1">Resides mostly in the nucleoli and relocalizes to the nucleoplasm upon DNA damage.</text>
</comment>
<comment type="PTM">
    <text evidence="1">Phosphorylated. Phosphorylation upon DNA damage induces relocalization to the nuclear plasma.</text>
</comment>
<comment type="similarity">
    <text evidence="1">Belongs to the XPG/RAD2 endonuclease family. FEN1 subfamily.</text>
</comment>
<sequence>MGIKRLSKLIKTYCSEGVQNRELKYYSGYKIAIDASMCIYQFLVAVRAEGQSLSWGDSTTSHISGIFYRSIRWIENGIIPVFVFDGIPPEEKIHEFEKRTKRRQDINAKLQDAIEQQDQVLVSKYDRMNVKMEKSHIEECQKTLRLLNIPYVIAPSEAEAYCAWLCKSKFVDAVATEDMDSLCFGSPLLLRNFNTALSQKLPVEEYNLHKILEGLQFTMEQFVDLCILLGCDYSATIRGVGMKRAFEYIKKYKSIDNLIGIVDFPDDFKYKEARTIFFTLGTDTSNNFTNENPINTNIATWDLIAVDSASINIEAVIDFLCNEKGFDKGRIETGIKKLQKQKKVNKQTRIDSFFKKKL</sequence>
<organism>
    <name type="scientific">Enterocytozoon bieneusi (strain H348)</name>
    <name type="common">Microsporidian parasite</name>
    <dbReference type="NCBI Taxonomy" id="481877"/>
    <lineage>
        <taxon>Eukaryota</taxon>
        <taxon>Fungi</taxon>
        <taxon>Fungi incertae sedis</taxon>
        <taxon>Microsporidia</taxon>
        <taxon>Enterocytozoonidae</taxon>
        <taxon>Enterocytozoon</taxon>
    </lineage>
</organism>
<reference key="1">
    <citation type="journal article" date="2007" name="PLoS ONE">
        <title>Patterns of genome evolution among the microsporidian parasites Encephalitozoon cuniculi, Antonospora locustae and Enterocytozoon bieneusi.</title>
        <authorList>
            <person name="Corradi N."/>
            <person name="Akiyoshi D.E."/>
            <person name="Morrison H.G."/>
            <person name="Feng X."/>
            <person name="Weiss L.M."/>
            <person name="Tzipori S."/>
            <person name="Keeling P.J."/>
        </authorList>
    </citation>
    <scope>NUCLEOTIDE SEQUENCE [LARGE SCALE GENOMIC DNA]</scope>
    <source>
        <strain>H348</strain>
    </source>
</reference>
<reference key="2">
    <citation type="journal article" date="2009" name="PLoS Pathog.">
        <title>Genomic survey of the non-cultivatable opportunistic human pathogen, Enterocytozoon bieneusi.</title>
        <authorList>
            <person name="Akiyoshi D.E."/>
            <person name="Morrison H.G."/>
            <person name="Lei S."/>
            <person name="Feng X."/>
            <person name="Zhang Q."/>
            <person name="Corradi N."/>
            <person name="Mayanja H."/>
            <person name="Tumwine J.K."/>
            <person name="Keeling P.J."/>
            <person name="Weiss L.M."/>
            <person name="Tzipori S."/>
        </authorList>
    </citation>
    <scope>NUCLEOTIDE SEQUENCE [LARGE SCALE GENOMIC DNA]</scope>
    <source>
        <strain>H348</strain>
    </source>
</reference>
<dbReference type="EC" id="3.1.-.-" evidence="1"/>
<dbReference type="EMBL" id="ABGB01000015">
    <property type="protein sequence ID" value="EED44575.1"/>
    <property type="molecule type" value="Genomic_DNA"/>
</dbReference>
<dbReference type="RefSeq" id="XP_002649556.1">
    <property type="nucleotide sequence ID" value="XM_002649510.1"/>
</dbReference>
<dbReference type="SMR" id="B7XHS8"/>
<dbReference type="FunCoup" id="B7XHS8">
    <property type="interactions" value="358"/>
</dbReference>
<dbReference type="STRING" id="481877.B7XHS8"/>
<dbReference type="VEuPathDB" id="MicrosporidiaDB:EBI_21734"/>
<dbReference type="HOGENOM" id="CLU_032444_2_0_1"/>
<dbReference type="InParanoid" id="B7XHS8"/>
<dbReference type="OMA" id="IQEVHID"/>
<dbReference type="OrthoDB" id="1937206at2759"/>
<dbReference type="GO" id="GO:0005739">
    <property type="term" value="C:mitochondrion"/>
    <property type="evidence" value="ECO:0007669"/>
    <property type="project" value="UniProtKB-SubCell"/>
</dbReference>
<dbReference type="GO" id="GO:0005730">
    <property type="term" value="C:nucleolus"/>
    <property type="evidence" value="ECO:0007669"/>
    <property type="project" value="UniProtKB-SubCell"/>
</dbReference>
<dbReference type="GO" id="GO:0005654">
    <property type="term" value="C:nucleoplasm"/>
    <property type="evidence" value="ECO:0007669"/>
    <property type="project" value="UniProtKB-SubCell"/>
</dbReference>
<dbReference type="GO" id="GO:0008409">
    <property type="term" value="F:5'-3' exonuclease activity"/>
    <property type="evidence" value="ECO:0007669"/>
    <property type="project" value="UniProtKB-UniRule"/>
</dbReference>
<dbReference type="GO" id="GO:0017108">
    <property type="term" value="F:5'-flap endonuclease activity"/>
    <property type="evidence" value="ECO:0007669"/>
    <property type="project" value="UniProtKB-UniRule"/>
</dbReference>
<dbReference type="GO" id="GO:0003677">
    <property type="term" value="F:DNA binding"/>
    <property type="evidence" value="ECO:0007669"/>
    <property type="project" value="UniProtKB-UniRule"/>
</dbReference>
<dbReference type="GO" id="GO:0000287">
    <property type="term" value="F:magnesium ion binding"/>
    <property type="evidence" value="ECO:0007669"/>
    <property type="project" value="UniProtKB-UniRule"/>
</dbReference>
<dbReference type="GO" id="GO:0006284">
    <property type="term" value="P:base-excision repair"/>
    <property type="evidence" value="ECO:0007669"/>
    <property type="project" value="UniProtKB-UniRule"/>
</dbReference>
<dbReference type="GO" id="GO:0043137">
    <property type="term" value="P:DNA replication, removal of RNA primer"/>
    <property type="evidence" value="ECO:0007669"/>
    <property type="project" value="UniProtKB-UniRule"/>
</dbReference>
<dbReference type="CDD" id="cd09907">
    <property type="entry name" value="H3TH_FEN1-Euk"/>
    <property type="match status" value="1"/>
</dbReference>
<dbReference type="CDD" id="cd09867">
    <property type="entry name" value="PIN_FEN1"/>
    <property type="match status" value="1"/>
</dbReference>
<dbReference type="FunFam" id="1.10.150.20:FF:000009">
    <property type="entry name" value="Flap endonuclease 1"/>
    <property type="match status" value="1"/>
</dbReference>
<dbReference type="FunFam" id="3.40.50.1010:FF:000016">
    <property type="entry name" value="Flap endonuclease 1"/>
    <property type="match status" value="1"/>
</dbReference>
<dbReference type="Gene3D" id="1.10.150.20">
    <property type="entry name" value="5' to 3' exonuclease, C-terminal subdomain"/>
    <property type="match status" value="1"/>
</dbReference>
<dbReference type="Gene3D" id="3.40.50.1010">
    <property type="entry name" value="5'-nuclease"/>
    <property type="match status" value="1"/>
</dbReference>
<dbReference type="HAMAP" id="MF_00614">
    <property type="entry name" value="Fen"/>
    <property type="match status" value="1"/>
</dbReference>
<dbReference type="InterPro" id="IPR036279">
    <property type="entry name" value="5-3_exonuclease_C_sf"/>
</dbReference>
<dbReference type="InterPro" id="IPR023426">
    <property type="entry name" value="Flap_endonuc"/>
</dbReference>
<dbReference type="InterPro" id="IPR008918">
    <property type="entry name" value="HhH2"/>
</dbReference>
<dbReference type="InterPro" id="IPR029060">
    <property type="entry name" value="PIN-like_dom_sf"/>
</dbReference>
<dbReference type="InterPro" id="IPR006086">
    <property type="entry name" value="XPG-I_dom"/>
</dbReference>
<dbReference type="InterPro" id="IPR006084">
    <property type="entry name" value="XPG/Rad2"/>
</dbReference>
<dbReference type="InterPro" id="IPR006085">
    <property type="entry name" value="XPG_DNA_repair_N"/>
</dbReference>
<dbReference type="PANTHER" id="PTHR11081:SF9">
    <property type="entry name" value="FLAP ENDONUCLEASE 1"/>
    <property type="match status" value="1"/>
</dbReference>
<dbReference type="PANTHER" id="PTHR11081">
    <property type="entry name" value="FLAP ENDONUCLEASE FAMILY MEMBER"/>
    <property type="match status" value="1"/>
</dbReference>
<dbReference type="Pfam" id="PF00867">
    <property type="entry name" value="XPG_I"/>
    <property type="match status" value="1"/>
</dbReference>
<dbReference type="Pfam" id="PF00752">
    <property type="entry name" value="XPG_N"/>
    <property type="match status" value="1"/>
</dbReference>
<dbReference type="PRINTS" id="PR00853">
    <property type="entry name" value="XPGRADSUPER"/>
</dbReference>
<dbReference type="SMART" id="SM00279">
    <property type="entry name" value="HhH2"/>
    <property type="match status" value="1"/>
</dbReference>
<dbReference type="SMART" id="SM00484">
    <property type="entry name" value="XPGI"/>
    <property type="match status" value="1"/>
</dbReference>
<dbReference type="SMART" id="SM00485">
    <property type="entry name" value="XPGN"/>
    <property type="match status" value="1"/>
</dbReference>
<dbReference type="SUPFAM" id="SSF47807">
    <property type="entry name" value="5' to 3' exonuclease, C-terminal subdomain"/>
    <property type="match status" value="1"/>
</dbReference>
<dbReference type="SUPFAM" id="SSF88723">
    <property type="entry name" value="PIN domain-like"/>
    <property type="match status" value="1"/>
</dbReference>